<protein>
    <recommendedName>
        <fullName evidence="1">Large ribosomal subunit protein bL28</fullName>
    </recommendedName>
    <alternativeName>
        <fullName evidence="2">50S ribosomal protein L28</fullName>
    </alternativeName>
</protein>
<proteinExistence type="inferred from homology"/>
<accession>Q2A4R1</accession>
<reference key="1">
    <citation type="submission" date="2006-03" db="EMBL/GenBank/DDBJ databases">
        <title>Complete genome sequence of Francisella tularensis LVS (Live Vaccine Strain).</title>
        <authorList>
            <person name="Chain P."/>
            <person name="Larimer F."/>
            <person name="Land M."/>
            <person name="Stilwagen S."/>
            <person name="Larsson P."/>
            <person name="Bearden S."/>
            <person name="Chu M."/>
            <person name="Oyston P."/>
            <person name="Forsman M."/>
            <person name="Andersson S."/>
            <person name="Lindler L."/>
            <person name="Titball R."/>
            <person name="Garcia E."/>
        </authorList>
    </citation>
    <scope>NUCLEOTIDE SEQUENCE [LARGE SCALE GENOMIC DNA]</scope>
    <source>
        <strain>LVS</strain>
    </source>
</reference>
<feature type="chain" id="PRO_1000007239" description="Large ribosomal subunit protein bL28">
    <location>
        <begin position="1"/>
        <end position="78"/>
    </location>
</feature>
<dbReference type="EMBL" id="AM233362">
    <property type="protein sequence ID" value="CAJ78962.1"/>
    <property type="molecule type" value="Genomic_DNA"/>
</dbReference>
<dbReference type="RefSeq" id="WP_003014822.1">
    <property type="nucleotide sequence ID" value="NZ_CP009694.1"/>
</dbReference>
<dbReference type="SMR" id="Q2A4R1"/>
<dbReference type="GeneID" id="75264165"/>
<dbReference type="KEGG" id="ftl:FTL_0522"/>
<dbReference type="Proteomes" id="UP000001944">
    <property type="component" value="Chromosome"/>
</dbReference>
<dbReference type="GO" id="GO:0022625">
    <property type="term" value="C:cytosolic large ribosomal subunit"/>
    <property type="evidence" value="ECO:0007669"/>
    <property type="project" value="TreeGrafter"/>
</dbReference>
<dbReference type="GO" id="GO:0003735">
    <property type="term" value="F:structural constituent of ribosome"/>
    <property type="evidence" value="ECO:0007669"/>
    <property type="project" value="InterPro"/>
</dbReference>
<dbReference type="GO" id="GO:0006412">
    <property type="term" value="P:translation"/>
    <property type="evidence" value="ECO:0007669"/>
    <property type="project" value="UniProtKB-UniRule"/>
</dbReference>
<dbReference type="FunFam" id="2.30.170.40:FF:000001">
    <property type="entry name" value="50S ribosomal protein L28"/>
    <property type="match status" value="1"/>
</dbReference>
<dbReference type="Gene3D" id="2.30.170.40">
    <property type="entry name" value="Ribosomal protein L28/L24"/>
    <property type="match status" value="1"/>
</dbReference>
<dbReference type="HAMAP" id="MF_00373">
    <property type="entry name" value="Ribosomal_bL28"/>
    <property type="match status" value="1"/>
</dbReference>
<dbReference type="InterPro" id="IPR026569">
    <property type="entry name" value="Ribosomal_bL28"/>
</dbReference>
<dbReference type="InterPro" id="IPR034704">
    <property type="entry name" value="Ribosomal_bL28/bL31-like_sf"/>
</dbReference>
<dbReference type="InterPro" id="IPR001383">
    <property type="entry name" value="Ribosomal_bL28_bact-type"/>
</dbReference>
<dbReference type="InterPro" id="IPR037147">
    <property type="entry name" value="Ribosomal_bL28_sf"/>
</dbReference>
<dbReference type="NCBIfam" id="TIGR00009">
    <property type="entry name" value="L28"/>
    <property type="match status" value="1"/>
</dbReference>
<dbReference type="PANTHER" id="PTHR13528">
    <property type="entry name" value="39S RIBOSOMAL PROTEIN L28, MITOCHONDRIAL"/>
    <property type="match status" value="1"/>
</dbReference>
<dbReference type="PANTHER" id="PTHR13528:SF2">
    <property type="entry name" value="LARGE RIBOSOMAL SUBUNIT PROTEIN BL28M"/>
    <property type="match status" value="1"/>
</dbReference>
<dbReference type="Pfam" id="PF00830">
    <property type="entry name" value="Ribosomal_L28"/>
    <property type="match status" value="1"/>
</dbReference>
<dbReference type="SUPFAM" id="SSF143800">
    <property type="entry name" value="L28p-like"/>
    <property type="match status" value="1"/>
</dbReference>
<organism>
    <name type="scientific">Francisella tularensis subsp. holarctica (strain LVS)</name>
    <dbReference type="NCBI Taxonomy" id="376619"/>
    <lineage>
        <taxon>Bacteria</taxon>
        <taxon>Pseudomonadati</taxon>
        <taxon>Pseudomonadota</taxon>
        <taxon>Gammaproteobacteria</taxon>
        <taxon>Thiotrichales</taxon>
        <taxon>Francisellaceae</taxon>
        <taxon>Francisella</taxon>
    </lineage>
</organism>
<comment type="similarity">
    <text evidence="1">Belongs to the bacterial ribosomal protein bL28 family.</text>
</comment>
<gene>
    <name evidence="1" type="primary">rpmB</name>
    <name type="ordered locus">FTL_0522</name>
</gene>
<sequence length="78" mass="8939">MSKVCIVTGKRPATGNNVSHAQNKTKRRFLPNLHAHRFWVESENRYIKLRVSSKGMRIIDKKGIDTVLSDLRAQGHKI</sequence>
<evidence type="ECO:0000255" key="1">
    <source>
        <dbReference type="HAMAP-Rule" id="MF_00373"/>
    </source>
</evidence>
<evidence type="ECO:0000305" key="2"/>
<name>RL28_FRATH</name>
<keyword id="KW-1185">Reference proteome</keyword>
<keyword id="KW-0687">Ribonucleoprotein</keyword>
<keyword id="KW-0689">Ribosomal protein</keyword>